<sequence>MRHRGPEEEACGVWLDAAALKRRKMQTHLIKLGTKMLPLLPGERKPNDPFTQRRGTRQTSIASFVTLQSGMASGGNQKNIFSLKENQTNKECKRTQLDCLDDGLLSPLVTSAPADIQEAGHPRSPQISGCQGLEMSSLTMMSLTQPDVLMGTGESKGPLDSSFSQYLERSCLLDQREAKRKGEGLRESKTDCPGMGSHIRPPGSKCHQPLDKAEMGKRGPTKENRQAPVHLQTYRSGSCSRKKTLLVTESPCPLSLFPWDSERSDRDSWSQLFTEDSQGQQVIAHNTKMPFRDVTNARNQGSGQFPDSPQAQGQDGPAQLHLQSYLLFTQDSEGNRVIRH</sequence>
<reference key="1">
    <citation type="journal article" date="2009" name="PLoS Biol.">
        <title>Lineage-specific biology revealed by a finished genome assembly of the mouse.</title>
        <authorList>
            <person name="Church D.M."/>
            <person name="Goodstadt L."/>
            <person name="Hillier L.W."/>
            <person name="Zody M.C."/>
            <person name="Goldstein S."/>
            <person name="She X."/>
            <person name="Bult C.J."/>
            <person name="Agarwala R."/>
            <person name="Cherry J.L."/>
            <person name="DiCuccio M."/>
            <person name="Hlavina W."/>
            <person name="Kapustin Y."/>
            <person name="Meric P."/>
            <person name="Maglott D."/>
            <person name="Birtle Z."/>
            <person name="Marques A.C."/>
            <person name="Graves T."/>
            <person name="Zhou S."/>
            <person name="Teague B."/>
            <person name="Potamousis K."/>
            <person name="Churas C."/>
            <person name="Place M."/>
            <person name="Herschleb J."/>
            <person name="Runnheim R."/>
            <person name="Forrest D."/>
            <person name="Amos-Landgraf J."/>
            <person name="Schwartz D.C."/>
            <person name="Cheng Z."/>
            <person name="Lindblad-Toh K."/>
            <person name="Eichler E.E."/>
            <person name="Ponting C.P."/>
        </authorList>
    </citation>
    <scope>NUCLEOTIDE SEQUENCE [LARGE SCALE GENOMIC DNA]</scope>
    <source>
        <strain>C57BL/6J</strain>
    </source>
</reference>
<reference key="2">
    <citation type="journal article" date="2004" name="Genome Res.">
        <title>The status, quality, and expansion of the NIH full-length cDNA project: the Mammalian Gene Collection (MGC).</title>
        <authorList>
            <consortium name="The MGC Project Team"/>
        </authorList>
    </citation>
    <scope>NUCLEOTIDE SEQUENCE [LARGE SCALE MRNA]</scope>
    <source>
        <tissue>Brain</tissue>
    </source>
</reference>
<feature type="chain" id="PRO_0000419630" description="Aurora kinase A- and ninein-interacting protein">
    <location>
        <begin position="1"/>
        <end position="340"/>
    </location>
</feature>
<feature type="region of interest" description="Interaction with AURKA" evidence="1">
    <location>
        <begin position="175"/>
        <end position="340"/>
    </location>
</feature>
<feature type="region of interest" description="Disordered" evidence="2">
    <location>
        <begin position="178"/>
        <end position="209"/>
    </location>
</feature>
<feature type="region of interest" description="Interaction with RBBP8/CtIP" evidence="1">
    <location>
        <begin position="266"/>
        <end position="340"/>
    </location>
</feature>
<feature type="region of interest" description="Disordered" evidence="2">
    <location>
        <begin position="293"/>
        <end position="317"/>
    </location>
</feature>
<feature type="compositionally biased region" description="Basic and acidic residues" evidence="2">
    <location>
        <begin position="178"/>
        <end position="190"/>
    </location>
</feature>
<feature type="compositionally biased region" description="Polar residues" evidence="2">
    <location>
        <begin position="296"/>
        <end position="313"/>
    </location>
</feature>
<feature type="modified residue" description="Phosphoserine" evidence="1">
    <location>
        <position position="277"/>
    </location>
</feature>
<feature type="sequence conflict" description="In Ref. 2; AAI38272." evidence="3" ref="2">
    <original>H</original>
    <variation>R</variation>
    <location>
        <position position="3"/>
    </location>
</feature>
<feature type="sequence conflict" description="In Ref. 2; AAI38272." evidence="3" ref="2">
    <original>D</original>
    <variation>G</variation>
    <location>
        <position position="147"/>
    </location>
</feature>
<feature type="sequence conflict" description="In Ref. 2; AAI38272." evidence="3" ref="2">
    <location>
        <position position="153"/>
    </location>
</feature>
<feature type="sequence conflict" description="In Ref. 2; AAI38272." evidence="3" ref="2">
    <original>YLE</original>
    <variation>DLG</variation>
    <location>
        <begin position="166"/>
        <end position="168"/>
    </location>
</feature>
<feature type="sequence conflict" description="In Ref. 2; AAI38272." evidence="3" ref="2">
    <original>Q</original>
    <variation>R</variation>
    <location>
        <position position="319"/>
    </location>
</feature>
<evidence type="ECO:0000250" key="1">
    <source>
        <dbReference type="UniProtKB" id="Q9H7T9"/>
    </source>
</evidence>
<evidence type="ECO:0000256" key="2">
    <source>
        <dbReference type="SAM" id="MobiDB-lite"/>
    </source>
</evidence>
<evidence type="ECO:0000305" key="3"/>
<evidence type="ECO:0000312" key="4">
    <source>
        <dbReference type="MGI" id="MGI:1917135"/>
    </source>
</evidence>
<protein>
    <recommendedName>
        <fullName evidence="3">Aurora kinase A- and ninein-interacting protein</fullName>
    </recommendedName>
</protein>
<proteinExistence type="evidence at transcript level"/>
<comment type="function">
    <text evidence="1">DNA-binding protein that accumulates at DNA double-strand breaks (DSBs) following DNA damage and promotes DNA resection and homologous recombination. Serves as a sensor of DNA damage: binds DNA with a strong preference for DNA substrates that mimic structures generated at stalled replication forks, and anchors RBBP8/CtIP to DSB sites to promote DNA end resection and ensuing homologous recombination repair. Inhibits non-homologous end joining (NHEJ). Required for the dynamic movement of AURKA at the centrosomes and spindle apparatus during the cell cycle.</text>
</comment>
<comment type="subunit">
    <text evidence="1">Interacts (via C-terminus) with AURKA (via C-terminus). Interacts (via N-terminus) with NIN; this interaction blocks NIN phosphorylation by both AURKA and GSK3B. Identified in a complex with NIN and AURKA. Interacts with RBBP8/CtIP.</text>
</comment>
<comment type="subcellular location">
    <subcellularLocation>
        <location evidence="1">Nucleus</location>
    </subcellularLocation>
    <subcellularLocation>
        <location evidence="1">Chromosome</location>
    </subcellularLocation>
    <subcellularLocation>
        <location evidence="1">Cytoplasm</location>
        <location evidence="1">Cytoskeleton</location>
        <location evidence="1">Microtubule organizing center</location>
        <location evidence="1">Centrosome</location>
    </subcellularLocation>
    <subcellularLocation>
        <location evidence="1">Cytoplasm</location>
        <location evidence="1">Cytoskeleton</location>
        <location evidence="1">Spindle pole</location>
    </subcellularLocation>
    <text evidence="1">Accumulates at sites of DNA damage by binding to DNA substrates that mimick structures generated at stalled replication forks. Localizes to the centrosome in interphase and to the spindle pole in metaphase.</text>
</comment>
<comment type="similarity">
    <text evidence="3">Belongs to the AUNIP family.</text>
</comment>
<organism>
    <name type="scientific">Mus musculus</name>
    <name type="common">Mouse</name>
    <dbReference type="NCBI Taxonomy" id="10090"/>
    <lineage>
        <taxon>Eukaryota</taxon>
        <taxon>Metazoa</taxon>
        <taxon>Chordata</taxon>
        <taxon>Craniata</taxon>
        <taxon>Vertebrata</taxon>
        <taxon>Euteleostomi</taxon>
        <taxon>Mammalia</taxon>
        <taxon>Eutheria</taxon>
        <taxon>Euarchontoglires</taxon>
        <taxon>Glires</taxon>
        <taxon>Rodentia</taxon>
        <taxon>Myomorpha</taxon>
        <taxon>Muroidea</taxon>
        <taxon>Muridae</taxon>
        <taxon>Murinae</taxon>
        <taxon>Mus</taxon>
        <taxon>Mus</taxon>
    </lineage>
</organism>
<gene>
    <name evidence="4" type="primary">Aunip</name>
</gene>
<dbReference type="EMBL" id="AL669982">
    <property type="status" value="NOT_ANNOTATED_CDS"/>
    <property type="molecule type" value="Genomic_DNA"/>
</dbReference>
<dbReference type="EMBL" id="BC138271">
    <property type="protein sequence ID" value="AAI38272.1"/>
    <property type="molecule type" value="mRNA"/>
</dbReference>
<dbReference type="CCDS" id="CCDS51326.1"/>
<dbReference type="RefSeq" id="NP_001074568.1">
    <property type="nucleotide sequence ID" value="NM_001081099.1"/>
</dbReference>
<dbReference type="FunCoup" id="E9Q6Z5">
    <property type="interactions" value="250"/>
</dbReference>
<dbReference type="STRING" id="10090.ENSMUSP00000101492"/>
<dbReference type="iPTMnet" id="E9Q6Z5"/>
<dbReference type="PhosphoSitePlus" id="E9Q6Z5"/>
<dbReference type="SwissPalm" id="E9Q6Z5"/>
<dbReference type="PaxDb" id="10090-ENSMUSP00000101492"/>
<dbReference type="ProteomicsDB" id="273634"/>
<dbReference type="Antibodypedia" id="50871">
    <property type="antibodies" value="56 antibodies from 12 providers"/>
</dbReference>
<dbReference type="Ensembl" id="ENSMUST00000105866.3">
    <property type="protein sequence ID" value="ENSMUSP00000101492.3"/>
    <property type="gene ID" value="ENSMUSG00000078521.3"/>
</dbReference>
<dbReference type="GeneID" id="69885"/>
<dbReference type="KEGG" id="mmu:69885"/>
<dbReference type="UCSC" id="uc008vfg.1">
    <property type="organism name" value="mouse"/>
</dbReference>
<dbReference type="AGR" id="MGI:1917135"/>
<dbReference type="CTD" id="79000"/>
<dbReference type="MGI" id="MGI:1917135">
    <property type="gene designation" value="Aunip"/>
</dbReference>
<dbReference type="VEuPathDB" id="HostDB:ENSMUSG00000078521"/>
<dbReference type="eggNOG" id="ENOG502SFBZ">
    <property type="taxonomic scope" value="Eukaryota"/>
</dbReference>
<dbReference type="GeneTree" id="ENSGT00390000003280"/>
<dbReference type="HOGENOM" id="CLU_835590_0_0_1"/>
<dbReference type="InParanoid" id="E9Q6Z5"/>
<dbReference type="OMA" id="VTNNQNR"/>
<dbReference type="OrthoDB" id="9946974at2759"/>
<dbReference type="PhylomeDB" id="E9Q6Z5"/>
<dbReference type="TreeFam" id="TF337334"/>
<dbReference type="BioGRID-ORCS" id="69885">
    <property type="hits" value="1 hit in 60 CRISPR screens"/>
</dbReference>
<dbReference type="ChiTaRS" id="Aunip">
    <property type="organism name" value="mouse"/>
</dbReference>
<dbReference type="PRO" id="PR:E9Q6Z5"/>
<dbReference type="Proteomes" id="UP000000589">
    <property type="component" value="Chromosome 4"/>
</dbReference>
<dbReference type="RNAct" id="E9Q6Z5">
    <property type="molecule type" value="protein"/>
</dbReference>
<dbReference type="Bgee" id="ENSMUSG00000078521">
    <property type="expression patterns" value="Expressed in animal zygote and 105 other cell types or tissues"/>
</dbReference>
<dbReference type="GO" id="GO:0005813">
    <property type="term" value="C:centrosome"/>
    <property type="evidence" value="ECO:0000250"/>
    <property type="project" value="UniProtKB"/>
</dbReference>
<dbReference type="GO" id="GO:0005737">
    <property type="term" value="C:cytoplasm"/>
    <property type="evidence" value="ECO:0007669"/>
    <property type="project" value="UniProtKB-KW"/>
</dbReference>
<dbReference type="GO" id="GO:0005634">
    <property type="term" value="C:nucleus"/>
    <property type="evidence" value="ECO:0007669"/>
    <property type="project" value="UniProtKB-SubCell"/>
</dbReference>
<dbReference type="GO" id="GO:0090734">
    <property type="term" value="C:site of DNA damage"/>
    <property type="evidence" value="ECO:0000250"/>
    <property type="project" value="UniProtKB"/>
</dbReference>
<dbReference type="GO" id="GO:0000922">
    <property type="term" value="C:spindle pole"/>
    <property type="evidence" value="ECO:0000250"/>
    <property type="project" value="UniProtKB"/>
</dbReference>
<dbReference type="GO" id="GO:0003684">
    <property type="term" value="F:damaged DNA binding"/>
    <property type="evidence" value="ECO:0000250"/>
    <property type="project" value="UniProtKB"/>
</dbReference>
<dbReference type="GO" id="GO:0000724">
    <property type="term" value="P:double-strand break repair via homologous recombination"/>
    <property type="evidence" value="ECO:0000250"/>
    <property type="project" value="UniProtKB"/>
</dbReference>
<dbReference type="GO" id="GO:2001033">
    <property type="term" value="P:negative regulation of double-strand break repair via nonhomologous end joining"/>
    <property type="evidence" value="ECO:0000250"/>
    <property type="project" value="UniProtKB"/>
</dbReference>
<dbReference type="GO" id="GO:0007051">
    <property type="term" value="P:spindle organization"/>
    <property type="evidence" value="ECO:0000250"/>
    <property type="project" value="UniProtKB"/>
</dbReference>
<dbReference type="InterPro" id="IPR029286">
    <property type="entry name" value="AUNIP"/>
</dbReference>
<dbReference type="PANTHER" id="PTHR14526">
    <property type="entry name" value="AURORA KINASE A AND NINEIN-INTERACTING PROTEIN"/>
    <property type="match status" value="1"/>
</dbReference>
<dbReference type="PANTHER" id="PTHR14526:SF2">
    <property type="entry name" value="AURORA KINASE A AND NINEIN-INTERACTING PROTEIN"/>
    <property type="match status" value="1"/>
</dbReference>
<dbReference type="Pfam" id="PF15334">
    <property type="entry name" value="AIB"/>
    <property type="match status" value="1"/>
</dbReference>
<name>AUNIP_MOUSE</name>
<accession>E9Q6Z5</accession>
<accession>B2RR86</accession>
<keyword id="KW-0158">Chromosome</keyword>
<keyword id="KW-0963">Cytoplasm</keyword>
<keyword id="KW-0206">Cytoskeleton</keyword>
<keyword id="KW-0227">DNA damage</keyword>
<keyword id="KW-0234">DNA repair</keyword>
<keyword id="KW-0238">DNA-binding</keyword>
<keyword id="KW-0539">Nucleus</keyword>
<keyword id="KW-0597">Phosphoprotein</keyword>
<keyword id="KW-1185">Reference proteome</keyword>